<keyword id="KW-0002">3D-structure</keyword>
<keyword id="KW-0031">Aminopeptidase</keyword>
<keyword id="KW-0037">Angiogenesis</keyword>
<keyword id="KW-1003">Cell membrane</keyword>
<keyword id="KW-0217">Developmental protein</keyword>
<keyword id="KW-0221">Differentiation</keyword>
<keyword id="KW-1015">Disulfide bond</keyword>
<keyword id="KW-0325">Glycoprotein</keyword>
<keyword id="KW-1183">Host cell receptor for virus entry</keyword>
<keyword id="KW-0945">Host-virus interaction</keyword>
<keyword id="KW-0378">Hydrolase</keyword>
<keyword id="KW-0472">Membrane</keyword>
<keyword id="KW-0479">Metal-binding</keyword>
<keyword id="KW-0482">Metalloprotease</keyword>
<keyword id="KW-0645">Protease</keyword>
<keyword id="KW-0675">Receptor</keyword>
<keyword id="KW-1185">Reference proteome</keyword>
<keyword id="KW-0735">Signal-anchor</keyword>
<keyword id="KW-0765">Sulfation</keyword>
<keyword id="KW-0812">Transmembrane</keyword>
<keyword id="KW-1133">Transmembrane helix</keyword>
<keyword id="KW-0862">Zinc</keyword>
<dbReference type="EC" id="3.4.11.2" evidence="1"/>
<dbReference type="EMBL" id="AAEX03002325">
    <property type="status" value="NOT_ANNOTATED_CDS"/>
    <property type="molecule type" value="Genomic_DNA"/>
</dbReference>
<dbReference type="EMBL" id="X98239">
    <property type="protein sequence ID" value="CAA66895.1"/>
    <property type="molecule type" value="mRNA"/>
</dbReference>
<dbReference type="RefSeq" id="NP_001139506.1">
    <property type="nucleotide sequence ID" value="NM_001146034.1"/>
</dbReference>
<dbReference type="PDB" id="7U0L">
    <property type="method" value="X-ray"/>
    <property type="resolution" value="3.30 A"/>
    <property type="chains" value="A=72-975"/>
</dbReference>
<dbReference type="PDB" id="8YZI">
    <property type="method" value="EM"/>
    <property type="resolution" value="3.05 A"/>
    <property type="chains" value="B/D=36-975"/>
</dbReference>
<dbReference type="PDB" id="8Z27">
    <property type="method" value="EM"/>
    <property type="resolution" value="2.86 A"/>
    <property type="chains" value="b=36-975"/>
</dbReference>
<dbReference type="PDBsum" id="7U0L"/>
<dbReference type="PDBsum" id="8YZI"/>
<dbReference type="PDBsum" id="8Z27"/>
<dbReference type="EMDB" id="EMD-39694"/>
<dbReference type="EMDB" id="EMD-39743"/>
<dbReference type="SMR" id="P79143"/>
<dbReference type="FunCoup" id="P79143">
    <property type="interactions" value="99"/>
</dbReference>
<dbReference type="STRING" id="9615.ENSCAFP00000017681"/>
<dbReference type="MEROPS" id="M01.001"/>
<dbReference type="GlyCosmos" id="P79143">
    <property type="glycosylation" value="9 sites, No reported glycans"/>
</dbReference>
<dbReference type="PaxDb" id="9612-ENSCAFP00000017681"/>
<dbReference type="Ensembl" id="ENSCAFT00000019074.5">
    <property type="protein sequence ID" value="ENSCAFP00000017681.3"/>
    <property type="gene ID" value="ENSCAFG00000012013.5"/>
</dbReference>
<dbReference type="GeneID" id="403913"/>
<dbReference type="KEGG" id="cfa:403913"/>
<dbReference type="CTD" id="290"/>
<dbReference type="VGNC" id="VGNC:53146">
    <property type="gene designation" value="ANPEP"/>
</dbReference>
<dbReference type="eggNOG" id="KOG1046">
    <property type="taxonomic scope" value="Eukaryota"/>
</dbReference>
<dbReference type="InParanoid" id="P79143"/>
<dbReference type="OMA" id="EETEYMP"/>
<dbReference type="OrthoDB" id="510539at2759"/>
<dbReference type="TreeFam" id="TF300395"/>
<dbReference type="Proteomes" id="UP000002254">
    <property type="component" value="Chromosome 3"/>
</dbReference>
<dbReference type="Proteomes" id="UP000694429">
    <property type="component" value="Unplaced"/>
</dbReference>
<dbReference type="Proteomes" id="UP000694542">
    <property type="component" value="Unplaced"/>
</dbReference>
<dbReference type="Proteomes" id="UP000805418">
    <property type="component" value="Unplaced"/>
</dbReference>
<dbReference type="Bgee" id="ENSCAFG00000012013">
    <property type="expression patterns" value="Expressed in jejunum and 46 other cell types or tissues"/>
</dbReference>
<dbReference type="GO" id="GO:0005737">
    <property type="term" value="C:cytoplasm"/>
    <property type="evidence" value="ECO:0000318"/>
    <property type="project" value="GO_Central"/>
</dbReference>
<dbReference type="GO" id="GO:0005615">
    <property type="term" value="C:extracellular space"/>
    <property type="evidence" value="ECO:0000318"/>
    <property type="project" value="GO_Central"/>
</dbReference>
<dbReference type="GO" id="GO:0005886">
    <property type="term" value="C:plasma membrane"/>
    <property type="evidence" value="ECO:0000250"/>
    <property type="project" value="UniProtKB"/>
</dbReference>
<dbReference type="GO" id="GO:0016285">
    <property type="term" value="F:alanyl aminopeptidase activity"/>
    <property type="evidence" value="ECO:0007669"/>
    <property type="project" value="UniProtKB-EC"/>
</dbReference>
<dbReference type="GO" id="GO:0070006">
    <property type="term" value="F:metalloaminopeptidase activity"/>
    <property type="evidence" value="ECO:0000318"/>
    <property type="project" value="GO_Central"/>
</dbReference>
<dbReference type="GO" id="GO:0042277">
    <property type="term" value="F:peptide binding"/>
    <property type="evidence" value="ECO:0000318"/>
    <property type="project" value="GO_Central"/>
</dbReference>
<dbReference type="GO" id="GO:0001618">
    <property type="term" value="F:virus receptor activity"/>
    <property type="evidence" value="ECO:0007669"/>
    <property type="project" value="UniProtKB-KW"/>
</dbReference>
<dbReference type="GO" id="GO:0008270">
    <property type="term" value="F:zinc ion binding"/>
    <property type="evidence" value="ECO:0000318"/>
    <property type="project" value="GO_Central"/>
</dbReference>
<dbReference type="GO" id="GO:0001525">
    <property type="term" value="P:angiogenesis"/>
    <property type="evidence" value="ECO:0007669"/>
    <property type="project" value="UniProtKB-KW"/>
</dbReference>
<dbReference type="GO" id="GO:0030154">
    <property type="term" value="P:cell differentiation"/>
    <property type="evidence" value="ECO:0007669"/>
    <property type="project" value="UniProtKB-KW"/>
</dbReference>
<dbReference type="GO" id="GO:0043171">
    <property type="term" value="P:peptide catabolic process"/>
    <property type="evidence" value="ECO:0000318"/>
    <property type="project" value="GO_Central"/>
</dbReference>
<dbReference type="GO" id="GO:0006508">
    <property type="term" value="P:proteolysis"/>
    <property type="evidence" value="ECO:0000318"/>
    <property type="project" value="GO_Central"/>
</dbReference>
<dbReference type="CDD" id="cd09601">
    <property type="entry name" value="M1_APN-Q_like"/>
    <property type="match status" value="1"/>
</dbReference>
<dbReference type="FunFam" id="2.60.40.1910:FF:000005">
    <property type="entry name" value="Aminopeptidase"/>
    <property type="match status" value="1"/>
</dbReference>
<dbReference type="FunFam" id="1.25.50.20:FF:000012">
    <property type="entry name" value="Aminopeptidase N"/>
    <property type="match status" value="1"/>
</dbReference>
<dbReference type="FunFam" id="2.60.40.1730:FF:000012">
    <property type="entry name" value="Aminopeptidase N"/>
    <property type="match status" value="1"/>
</dbReference>
<dbReference type="FunFam" id="1.10.390.10:FF:000016">
    <property type="entry name" value="Glutamyl aminopeptidase"/>
    <property type="match status" value="1"/>
</dbReference>
<dbReference type="Gene3D" id="1.25.50.20">
    <property type="match status" value="1"/>
</dbReference>
<dbReference type="Gene3D" id="2.60.40.1910">
    <property type="match status" value="1"/>
</dbReference>
<dbReference type="Gene3D" id="1.10.390.10">
    <property type="entry name" value="Neutral Protease Domain 2"/>
    <property type="match status" value="1"/>
</dbReference>
<dbReference type="Gene3D" id="2.60.40.1730">
    <property type="entry name" value="tricorn interacting facor f3 domain"/>
    <property type="match status" value="1"/>
</dbReference>
<dbReference type="InterPro" id="IPR045357">
    <property type="entry name" value="Aminopeptidase_N-like_N"/>
</dbReference>
<dbReference type="InterPro" id="IPR042097">
    <property type="entry name" value="Aminopeptidase_N-like_N_sf"/>
</dbReference>
<dbReference type="InterPro" id="IPR024571">
    <property type="entry name" value="ERAP1-like_C_dom"/>
</dbReference>
<dbReference type="InterPro" id="IPR034016">
    <property type="entry name" value="M1_APN-typ"/>
</dbReference>
<dbReference type="InterPro" id="IPR001930">
    <property type="entry name" value="Peptidase_M1"/>
</dbReference>
<dbReference type="InterPro" id="IPR050344">
    <property type="entry name" value="Peptidase_M1_aminopeptidases"/>
</dbReference>
<dbReference type="InterPro" id="IPR014782">
    <property type="entry name" value="Peptidase_M1_dom"/>
</dbReference>
<dbReference type="InterPro" id="IPR027268">
    <property type="entry name" value="Peptidase_M4/M1_CTD_sf"/>
</dbReference>
<dbReference type="PANTHER" id="PTHR11533:SF172">
    <property type="entry name" value="AMINOPEPTIDASE N"/>
    <property type="match status" value="1"/>
</dbReference>
<dbReference type="PANTHER" id="PTHR11533">
    <property type="entry name" value="PROTEASE M1 ZINC METALLOPROTEASE"/>
    <property type="match status" value="1"/>
</dbReference>
<dbReference type="Pfam" id="PF11838">
    <property type="entry name" value="ERAP1_C"/>
    <property type="match status" value="1"/>
</dbReference>
<dbReference type="Pfam" id="PF01433">
    <property type="entry name" value="Peptidase_M1"/>
    <property type="match status" value="1"/>
</dbReference>
<dbReference type="Pfam" id="PF17900">
    <property type="entry name" value="Peptidase_M1_N"/>
    <property type="match status" value="1"/>
</dbReference>
<dbReference type="PRINTS" id="PR00756">
    <property type="entry name" value="ALADIPTASE"/>
</dbReference>
<dbReference type="SUPFAM" id="SSF63737">
    <property type="entry name" value="Leukotriene A4 hydrolase N-terminal domain"/>
    <property type="match status" value="1"/>
</dbReference>
<dbReference type="SUPFAM" id="SSF55486">
    <property type="entry name" value="Metalloproteases ('zincins'), catalytic domain"/>
    <property type="match status" value="1"/>
</dbReference>
<dbReference type="PROSITE" id="PS00142">
    <property type="entry name" value="ZINC_PROTEASE"/>
    <property type="match status" value="1"/>
</dbReference>
<evidence type="ECO:0000250" key="1">
    <source>
        <dbReference type="UniProtKB" id="P15144"/>
    </source>
</evidence>
<evidence type="ECO:0000250" key="2">
    <source>
        <dbReference type="UniProtKB" id="P15145"/>
    </source>
</evidence>
<evidence type="ECO:0000250" key="3">
    <source>
        <dbReference type="UniProtKB" id="P97449"/>
    </source>
</evidence>
<evidence type="ECO:0000255" key="4"/>
<evidence type="ECO:0000255" key="5">
    <source>
        <dbReference type="PROSITE-ProRule" id="PRU10095"/>
    </source>
</evidence>
<evidence type="ECO:0000256" key="6">
    <source>
        <dbReference type="SAM" id="MobiDB-lite"/>
    </source>
</evidence>
<evidence type="ECO:0000269" key="7">
    <source>
    </source>
</evidence>
<evidence type="ECO:0000305" key="8"/>
<organism>
    <name type="scientific">Canis lupus familiaris</name>
    <name type="common">Dog</name>
    <name type="synonym">Canis familiaris</name>
    <dbReference type="NCBI Taxonomy" id="9615"/>
    <lineage>
        <taxon>Eukaryota</taxon>
        <taxon>Metazoa</taxon>
        <taxon>Chordata</taxon>
        <taxon>Craniata</taxon>
        <taxon>Vertebrata</taxon>
        <taxon>Euteleostomi</taxon>
        <taxon>Mammalia</taxon>
        <taxon>Eutheria</taxon>
        <taxon>Laurasiatheria</taxon>
        <taxon>Carnivora</taxon>
        <taxon>Caniformia</taxon>
        <taxon>Canidae</taxon>
        <taxon>Canis</taxon>
    </lineage>
</organism>
<name>AMPN_CANLF</name>
<gene>
    <name type="primary">ANPEP</name>
</gene>
<feature type="chain" id="PRO_0000095079" description="Aminopeptidase N">
    <location>
        <begin position="1"/>
        <end position="975"/>
    </location>
</feature>
<feature type="topological domain" description="Cytoplasmic" evidence="1">
    <location>
        <begin position="1"/>
        <end position="11"/>
    </location>
</feature>
<feature type="transmembrane region" description="Helical; Signal-anchor for type II membrane protein" evidence="4">
    <location>
        <begin position="12"/>
        <end position="32"/>
    </location>
</feature>
<feature type="topological domain" description="Extracellular" evidence="1">
    <location>
        <begin position="33"/>
        <end position="975"/>
    </location>
</feature>
<feature type="region of interest" description="Cytosolic Ser/Thr-rich junction" evidence="1">
    <location>
        <begin position="33"/>
        <end position="74"/>
    </location>
</feature>
<feature type="region of interest" description="Disordered" evidence="6">
    <location>
        <begin position="41"/>
        <end position="68"/>
    </location>
</feature>
<feature type="region of interest" description="Metalloprotease">
    <location>
        <begin position="75"/>
        <end position="975"/>
    </location>
</feature>
<feature type="compositionally biased region" description="Low complexity" evidence="6">
    <location>
        <begin position="43"/>
        <end position="59"/>
    </location>
</feature>
<feature type="active site" description="Proton acceptor" evidence="5">
    <location>
        <position position="395"/>
    </location>
</feature>
<feature type="binding site" evidence="1">
    <location>
        <begin position="358"/>
        <end position="362"/>
    </location>
    <ligand>
        <name>substrate</name>
    </ligand>
</feature>
<feature type="binding site" evidence="5">
    <location>
        <position position="394"/>
    </location>
    <ligand>
        <name>Zn(2+)</name>
        <dbReference type="ChEBI" id="CHEBI:29105"/>
        <note>catalytic</note>
    </ligand>
</feature>
<feature type="binding site" evidence="5">
    <location>
        <position position="398"/>
    </location>
    <ligand>
        <name>Zn(2+)</name>
        <dbReference type="ChEBI" id="CHEBI:29105"/>
        <note>catalytic</note>
    </ligand>
</feature>
<feature type="binding site" evidence="1">
    <location>
        <position position="417"/>
    </location>
    <ligand>
        <name>Zn(2+)</name>
        <dbReference type="ChEBI" id="CHEBI:29105"/>
        <note>catalytic</note>
    </ligand>
</feature>
<feature type="site" description="Transition state stabilizer" evidence="1">
    <location>
        <position position="483"/>
    </location>
</feature>
<feature type="modified residue" description="Sulfotyrosine" evidence="4">
    <location>
        <position position="182"/>
    </location>
</feature>
<feature type="modified residue" description="Sulfotyrosine" evidence="4">
    <location>
        <position position="425"/>
    </location>
</feature>
<feature type="modified residue" description="Sulfotyrosine" evidence="4">
    <location>
        <position position="430"/>
    </location>
</feature>
<feature type="glycosylation site" description="N-linked (GlcNAc...) asparagine" evidence="1">
    <location>
        <position position="134"/>
    </location>
</feature>
<feature type="glycosylation site" description="N-linked (GlcNAc...) asparagine" evidence="1">
    <location>
        <position position="240"/>
    </location>
</feature>
<feature type="glycosylation site" description="N-linked (GlcNAc...) asparagine" evidence="1">
    <location>
        <position position="271"/>
    </location>
</feature>
<feature type="glycosylation site" description="N-linked (GlcNAc...) asparagine" evidence="1">
    <location>
        <position position="533"/>
    </location>
</feature>
<feature type="glycosylation site" description="N-linked (GlcNAc...) asparagine" evidence="1">
    <location>
        <position position="580"/>
    </location>
</feature>
<feature type="glycosylation site" description="N-linked (GlcNAc...) asparagine" evidence="1">
    <location>
        <position position="633"/>
    </location>
</feature>
<feature type="glycosylation site" description="N-linked (GlcNAc...) asparagine" evidence="1">
    <location>
        <position position="689"/>
    </location>
</feature>
<feature type="glycosylation site" description="N-linked (GlcNAc...) asparagine" evidence="4">
    <location>
        <position position="747"/>
    </location>
</feature>
<feature type="glycosylation site" description="N-linked (GlcNAc...) asparagine" evidence="1">
    <location>
        <position position="826"/>
    </location>
</feature>
<feature type="disulfide bond" evidence="1">
    <location>
        <begin position="769"/>
        <end position="776"/>
    </location>
</feature>
<feature type="disulfide bond" evidence="1">
    <location>
        <begin position="806"/>
        <end position="842"/>
    </location>
</feature>
<accession>P79143</accession>
<accession>F1PCB5</accession>
<sequence length="975" mass="110257">MAKGFYISKALGILAIVLGIAAVSTIIALSVVYAQEKNKNAESSPVSSPVSSPVSSPVSPTNPSTTAATTLAQSKPWNHYRLPKTLIPSSYNVTLRPYLTPNSNGLYTFKGSSTVRFTCKESTSMIIIHSKKLNYTNIQGQRVALRGVGGSQAPAIDRTELVEVTEYLVVHLREPLQVNSQYEMDSKFEGELADDLAGFYRSEYTENGVKKVLATTQMQAADARKSFPCFDEPAMKATFNITLIHPSNLVALSNMLPRGPSVPFTEEPNWNVTEFETTPIMSTYLLAYIVSEFKNVQENTPSNVLIRIWARPSAMDQGHGNYALRVTGPILDFFSRHYDTPYPLNKSDQIALPDFNAGAMENWGLVTYRESALLYDPQSSSIGNKERVVTVIAHELAHQWFGNLVTLEWWNDLWLNEGFASYVEYLGADYAEPTWNLKDLIVLNEVYRVMAVDALASSHPLSSPASEVNTPAQISEVFDSISYSKGASVLRMLSSFLTEDLFKKGVASYLHTFAYQNTIYLDLWNHLQWALGNQTAINLPYTVNAIMDRWILQMGFPVVTVDTTTGTLSQKHFLLDPQSNVTRPSKFNYLWIIPISSVKSGTQQAHYWMPDNAKVQNDLFKTTGDEWVLLNLNVTGYYLVNYDQNNWKKIHTQLQTDLSVIPVINRAQVIHDTFDLASAQIVPVTLALNSTLFLNQETEYMPWEAALSSLSYFKLMFDRSEVYGPMKNYLRKQVTPLFNHFEKITQNWTDHPQTLTEQYNEINAVSTACTYGVPKCKDLVSTLFAEWRKNPQNNPIYPNLRSTVYCNAIAQGGEEEWNFVWEQFRNTSLVNEADKLRSALACSTQVWILNRYLSYTLNPEFIRKQDVISTLSSIASNVIGQSLAWDFIQSNWKKLFEDYGTGSFSFSNLIQAVTRRFSTEFELQQLEQFKANNMDTGFGSGTRALEQALEKTKANIKWVKENKEAVLQWFRENSQ</sequence>
<protein>
    <recommendedName>
        <fullName evidence="8">Aminopeptidase N</fullName>
        <shortName>AP-N</shortName>
        <shortName>cAPN</shortName>
        <ecNumber evidence="1">3.4.11.2</ecNumber>
    </recommendedName>
    <alternativeName>
        <fullName>Alanyl aminopeptidase</fullName>
    </alternativeName>
    <alternativeName>
        <fullName>Aminopeptidase M</fullName>
        <shortName>AP-M</shortName>
    </alternativeName>
    <alternativeName>
        <fullName>Microsomal aminopeptidase</fullName>
    </alternativeName>
    <cdAntigenName>CD13</cdAntigenName>
</protein>
<comment type="function">
    <text evidence="1 3">Broad specificity aminopeptidase which plays a role in the final digestion of peptides generated from hydrolysis of proteins by gastric and pancreatic proteases. Also involved in the processing of various peptides including peptide hormones, such as angiotensin III and IV, neuropeptides, and chemokines. May also be involved the cleavage of peptides bound to major histocompatibility complex class II molecules of antigen presenting cells. May have a role in angiogenesis and promote cholesterol crystallization. May have a role in amino acid transport by acting as binding partner of amino acid transporter SLC6A19 and regulating its activity (By similarity).</text>
</comment>
<comment type="function">
    <text evidence="7">(Microbial infection) Probable receptor for canine coronavirus (CCoV).</text>
</comment>
<comment type="catalytic activity">
    <reaction evidence="1">
        <text>Release of an N-terminal amino acid, Xaa-|-Yaa- from a peptide, amide or arylamide. Xaa is preferably Ala, but may be most amino acids including Pro (slow action). When a terminal hydrophobic residue is followed by a prolyl residue, the two may be released as an intact Xaa-Pro dipeptide.</text>
        <dbReference type="EC" id="3.4.11.2"/>
    </reaction>
</comment>
<comment type="cofactor">
    <cofactor evidence="1">
        <name>Zn(2+)</name>
        <dbReference type="ChEBI" id="CHEBI:29105"/>
    </cofactor>
    <text evidence="1">Binds 1 zinc ion per subunit.</text>
</comment>
<comment type="subunit">
    <text evidence="7">(Microbial infection) Interacts with CCoV spike glycoprotein.</text>
</comment>
<comment type="subunit">
    <text evidence="1 3">Homodimer. Interacts with SLC6A19 (By similarity).</text>
</comment>
<comment type="subcellular location">
    <subcellularLocation>
        <location evidence="1">Cell membrane</location>
        <topology evidence="1">Single-pass type II membrane protein</topology>
    </subcellularLocation>
    <text evidence="1">Also found as a soluble form.</text>
</comment>
<comment type="domain">
    <text evidence="7">Amino acids 1-191 are essential to mediate susceptibility to infection with CCV (in canine/human chimeric studies).</text>
</comment>
<comment type="PTM">
    <text evidence="2">Sulfated.</text>
</comment>
<comment type="PTM">
    <text evidence="1">N- and O-glycosylated.</text>
</comment>
<comment type="PTM">
    <text evidence="1">May undergo proteolysis and give rise to a soluble form.</text>
</comment>
<comment type="similarity">
    <text evidence="8">Belongs to the peptidase M1 family.</text>
</comment>
<proteinExistence type="evidence at protein level"/>
<reference key="1">
    <citation type="journal article" date="2005" name="Nature">
        <title>Genome sequence, comparative analysis and haplotype structure of the domestic dog.</title>
        <authorList>
            <person name="Lindblad-Toh K."/>
            <person name="Wade C.M."/>
            <person name="Mikkelsen T.S."/>
            <person name="Karlsson E.K."/>
            <person name="Jaffe D.B."/>
            <person name="Kamal M."/>
            <person name="Clamp M."/>
            <person name="Chang J.L."/>
            <person name="Kulbokas E.J. III"/>
            <person name="Zody M.C."/>
            <person name="Mauceli E."/>
            <person name="Xie X."/>
            <person name="Breen M."/>
            <person name="Wayne R.K."/>
            <person name="Ostrander E.A."/>
            <person name="Ponting C.P."/>
            <person name="Galibert F."/>
            <person name="Smith D.R."/>
            <person name="deJong P.J."/>
            <person name="Kirkness E.F."/>
            <person name="Alvarez P."/>
            <person name="Biagi T."/>
            <person name="Brockman W."/>
            <person name="Butler J."/>
            <person name="Chin C.-W."/>
            <person name="Cook A."/>
            <person name="Cuff J."/>
            <person name="Daly M.J."/>
            <person name="DeCaprio D."/>
            <person name="Gnerre S."/>
            <person name="Grabherr M."/>
            <person name="Kellis M."/>
            <person name="Kleber M."/>
            <person name="Bardeleben C."/>
            <person name="Goodstadt L."/>
            <person name="Heger A."/>
            <person name="Hitte C."/>
            <person name="Kim L."/>
            <person name="Koepfli K.-P."/>
            <person name="Parker H.G."/>
            <person name="Pollinger J.P."/>
            <person name="Searle S.M.J."/>
            <person name="Sutter N.B."/>
            <person name="Thomas R."/>
            <person name="Webber C."/>
            <person name="Baldwin J."/>
            <person name="Abebe A."/>
            <person name="Abouelleil A."/>
            <person name="Aftuck L."/>
            <person name="Ait-Zahra M."/>
            <person name="Aldredge T."/>
            <person name="Allen N."/>
            <person name="An P."/>
            <person name="Anderson S."/>
            <person name="Antoine C."/>
            <person name="Arachchi H."/>
            <person name="Aslam A."/>
            <person name="Ayotte L."/>
            <person name="Bachantsang P."/>
            <person name="Barry A."/>
            <person name="Bayul T."/>
            <person name="Benamara M."/>
            <person name="Berlin A."/>
            <person name="Bessette D."/>
            <person name="Blitshteyn B."/>
            <person name="Bloom T."/>
            <person name="Blye J."/>
            <person name="Boguslavskiy L."/>
            <person name="Bonnet C."/>
            <person name="Boukhgalter B."/>
            <person name="Brown A."/>
            <person name="Cahill P."/>
            <person name="Calixte N."/>
            <person name="Camarata J."/>
            <person name="Cheshatsang Y."/>
            <person name="Chu J."/>
            <person name="Citroen M."/>
            <person name="Collymore A."/>
            <person name="Cooke P."/>
            <person name="Dawoe T."/>
            <person name="Daza R."/>
            <person name="Decktor K."/>
            <person name="DeGray S."/>
            <person name="Dhargay N."/>
            <person name="Dooley K."/>
            <person name="Dooley K."/>
            <person name="Dorje P."/>
            <person name="Dorjee K."/>
            <person name="Dorris L."/>
            <person name="Duffey N."/>
            <person name="Dupes A."/>
            <person name="Egbiremolen O."/>
            <person name="Elong R."/>
            <person name="Falk J."/>
            <person name="Farina A."/>
            <person name="Faro S."/>
            <person name="Ferguson D."/>
            <person name="Ferreira P."/>
            <person name="Fisher S."/>
            <person name="FitzGerald M."/>
            <person name="Foley K."/>
            <person name="Foley C."/>
            <person name="Franke A."/>
            <person name="Friedrich D."/>
            <person name="Gage D."/>
            <person name="Garber M."/>
            <person name="Gearin G."/>
            <person name="Giannoukos G."/>
            <person name="Goode T."/>
            <person name="Goyette A."/>
            <person name="Graham J."/>
            <person name="Grandbois E."/>
            <person name="Gyaltsen K."/>
            <person name="Hafez N."/>
            <person name="Hagopian D."/>
            <person name="Hagos B."/>
            <person name="Hall J."/>
            <person name="Healy C."/>
            <person name="Hegarty R."/>
            <person name="Honan T."/>
            <person name="Horn A."/>
            <person name="Houde N."/>
            <person name="Hughes L."/>
            <person name="Hunnicutt L."/>
            <person name="Husby M."/>
            <person name="Jester B."/>
            <person name="Jones C."/>
            <person name="Kamat A."/>
            <person name="Kanga B."/>
            <person name="Kells C."/>
            <person name="Khazanovich D."/>
            <person name="Kieu A.C."/>
            <person name="Kisner P."/>
            <person name="Kumar M."/>
            <person name="Lance K."/>
            <person name="Landers T."/>
            <person name="Lara M."/>
            <person name="Lee W."/>
            <person name="Leger J.-P."/>
            <person name="Lennon N."/>
            <person name="Leuper L."/>
            <person name="LeVine S."/>
            <person name="Liu J."/>
            <person name="Liu X."/>
            <person name="Lokyitsang Y."/>
            <person name="Lokyitsang T."/>
            <person name="Lui A."/>
            <person name="Macdonald J."/>
            <person name="Major J."/>
            <person name="Marabella R."/>
            <person name="Maru K."/>
            <person name="Matthews C."/>
            <person name="McDonough S."/>
            <person name="Mehta T."/>
            <person name="Meldrim J."/>
            <person name="Melnikov A."/>
            <person name="Meneus L."/>
            <person name="Mihalev A."/>
            <person name="Mihova T."/>
            <person name="Miller K."/>
            <person name="Mittelman R."/>
            <person name="Mlenga V."/>
            <person name="Mulrain L."/>
            <person name="Munson G."/>
            <person name="Navidi A."/>
            <person name="Naylor J."/>
            <person name="Nguyen T."/>
            <person name="Nguyen N."/>
            <person name="Nguyen C."/>
            <person name="Nguyen T."/>
            <person name="Nicol R."/>
            <person name="Norbu N."/>
            <person name="Norbu C."/>
            <person name="Novod N."/>
            <person name="Nyima T."/>
            <person name="Olandt P."/>
            <person name="O'Neill B."/>
            <person name="O'Neill K."/>
            <person name="Osman S."/>
            <person name="Oyono L."/>
            <person name="Patti C."/>
            <person name="Perrin D."/>
            <person name="Phunkhang P."/>
            <person name="Pierre F."/>
            <person name="Priest M."/>
            <person name="Rachupka A."/>
            <person name="Raghuraman S."/>
            <person name="Rameau R."/>
            <person name="Ray V."/>
            <person name="Raymond C."/>
            <person name="Rege F."/>
            <person name="Rise C."/>
            <person name="Rogers J."/>
            <person name="Rogov P."/>
            <person name="Sahalie J."/>
            <person name="Settipalli S."/>
            <person name="Sharpe T."/>
            <person name="Shea T."/>
            <person name="Sheehan M."/>
            <person name="Sherpa N."/>
            <person name="Shi J."/>
            <person name="Shih D."/>
            <person name="Sloan J."/>
            <person name="Smith C."/>
            <person name="Sparrow T."/>
            <person name="Stalker J."/>
            <person name="Stange-Thomann N."/>
            <person name="Stavropoulos S."/>
            <person name="Stone C."/>
            <person name="Stone S."/>
            <person name="Sykes S."/>
            <person name="Tchuinga P."/>
            <person name="Tenzing P."/>
            <person name="Tesfaye S."/>
            <person name="Thoulutsang D."/>
            <person name="Thoulutsang Y."/>
            <person name="Topham K."/>
            <person name="Topping I."/>
            <person name="Tsamla T."/>
            <person name="Vassiliev H."/>
            <person name="Venkataraman V."/>
            <person name="Vo A."/>
            <person name="Wangchuk T."/>
            <person name="Wangdi T."/>
            <person name="Weiand M."/>
            <person name="Wilkinson J."/>
            <person name="Wilson A."/>
            <person name="Yadav S."/>
            <person name="Yang S."/>
            <person name="Yang X."/>
            <person name="Young G."/>
            <person name="Yu Q."/>
            <person name="Zainoun J."/>
            <person name="Zembek L."/>
            <person name="Zimmer A."/>
            <person name="Lander E.S."/>
        </authorList>
    </citation>
    <scope>NUCLEOTIDE SEQUENCE [LARGE SCALE GENOMIC DNA]</scope>
    <source>
        <strain>Boxer</strain>
    </source>
</reference>
<reference key="2">
    <citation type="journal article" date="1997" name="J. Virol.">
        <title>Interspecies aminopeptidase-N chimeras reveal species-specific receptor recognition by canine coronavirus, feline infectious peritonitis virus, and transmissible gastroenteritis virus.</title>
        <authorList>
            <person name="Benbacer L."/>
            <person name="Kut E."/>
            <person name="Besnardeau L."/>
            <person name="Laude H."/>
            <person name="Delmas B."/>
        </authorList>
    </citation>
    <scope>NUCLEOTIDE SEQUENCE [MRNA] OF 657-847</scope>
    <scope>FUNCTION (MICROBIAL INFECTION)</scope>
    <scope>INTERACTION WITH CCOV SPIKE GLYCOPROTEIN (MICROBIAL INFECTION)</scope>
    <scope>IDENTIFICATION OF RECEPTOR FUNCTIONAL DOMAINS FOR CCOV INFECTION (MICROBIAL INFECTION)</scope>
    <source>
        <tissue>Small intestine</tissue>
    </source>
</reference>